<name>XERC_MYCBT</name>
<sequence>MQAILDEFDEYLALQCGRSVHTRRAYLGDLRSLFAFLADRGSSLDALTLSVLRSWLAATAGAGAARTTLARRTSAVKAFTAWAVRRGLLAGDPAARLQVPKARRTLPAVLRQDQALRAMAAAESGAEQGDPLALRDRLIVELLYATGIRVSELCGLDVDDIDTGHRLVRVLGKGNKQRTVPFGQPAADALHAWLVDGRRALVTAESGHALLLGARGRRLDVRQARTAVHQTVAAVDGAPDMGPHGLRHSAATHLLEGGADLRVVQELLGHSSLATTQLYTHVAVARLRAVHERAHPRA</sequence>
<dbReference type="EMBL" id="AP010918">
    <property type="protein sequence ID" value="BAH27188.1"/>
    <property type="molecule type" value="Genomic_DNA"/>
</dbReference>
<dbReference type="RefSeq" id="WP_003414689.1">
    <property type="nucleotide sequence ID" value="NZ_CP014566.1"/>
</dbReference>
<dbReference type="SMR" id="C1AG09"/>
<dbReference type="KEGG" id="mbt:JTY_2910"/>
<dbReference type="HOGENOM" id="CLU_027562_9_0_11"/>
<dbReference type="GO" id="GO:0005737">
    <property type="term" value="C:cytoplasm"/>
    <property type="evidence" value="ECO:0007669"/>
    <property type="project" value="UniProtKB-SubCell"/>
</dbReference>
<dbReference type="GO" id="GO:0003677">
    <property type="term" value="F:DNA binding"/>
    <property type="evidence" value="ECO:0007669"/>
    <property type="project" value="UniProtKB-KW"/>
</dbReference>
<dbReference type="GO" id="GO:0009037">
    <property type="term" value="F:tyrosine-based site-specific recombinase activity"/>
    <property type="evidence" value="ECO:0007669"/>
    <property type="project" value="UniProtKB-UniRule"/>
</dbReference>
<dbReference type="GO" id="GO:0051301">
    <property type="term" value="P:cell division"/>
    <property type="evidence" value="ECO:0007669"/>
    <property type="project" value="UniProtKB-KW"/>
</dbReference>
<dbReference type="GO" id="GO:0007059">
    <property type="term" value="P:chromosome segregation"/>
    <property type="evidence" value="ECO:0007669"/>
    <property type="project" value="UniProtKB-UniRule"/>
</dbReference>
<dbReference type="GO" id="GO:0006313">
    <property type="term" value="P:DNA transposition"/>
    <property type="evidence" value="ECO:0007669"/>
    <property type="project" value="UniProtKB-UniRule"/>
</dbReference>
<dbReference type="CDD" id="cd00798">
    <property type="entry name" value="INT_XerDC_C"/>
    <property type="match status" value="1"/>
</dbReference>
<dbReference type="FunFam" id="1.10.443.10:FF:000007">
    <property type="entry name" value="Tyrosine recombinase XerC"/>
    <property type="match status" value="1"/>
</dbReference>
<dbReference type="Gene3D" id="1.10.150.130">
    <property type="match status" value="1"/>
</dbReference>
<dbReference type="Gene3D" id="1.10.443.10">
    <property type="entry name" value="Intergrase catalytic core"/>
    <property type="match status" value="1"/>
</dbReference>
<dbReference type="HAMAP" id="MF_01808">
    <property type="entry name" value="Recomb_XerC_XerD"/>
    <property type="match status" value="1"/>
</dbReference>
<dbReference type="InterPro" id="IPR044068">
    <property type="entry name" value="CB"/>
</dbReference>
<dbReference type="InterPro" id="IPR011010">
    <property type="entry name" value="DNA_brk_join_enz"/>
</dbReference>
<dbReference type="InterPro" id="IPR013762">
    <property type="entry name" value="Integrase-like_cat_sf"/>
</dbReference>
<dbReference type="InterPro" id="IPR002104">
    <property type="entry name" value="Integrase_catalytic"/>
</dbReference>
<dbReference type="InterPro" id="IPR010998">
    <property type="entry name" value="Integrase_recombinase_N"/>
</dbReference>
<dbReference type="InterPro" id="IPR004107">
    <property type="entry name" value="Integrase_SAM-like_N"/>
</dbReference>
<dbReference type="InterPro" id="IPR023009">
    <property type="entry name" value="Tyrosine_recombinase_XerC/XerD"/>
</dbReference>
<dbReference type="InterPro" id="IPR050090">
    <property type="entry name" value="Tyrosine_recombinase_XerCD"/>
</dbReference>
<dbReference type="NCBIfam" id="NF001399">
    <property type="entry name" value="PRK00283.1"/>
    <property type="match status" value="1"/>
</dbReference>
<dbReference type="PANTHER" id="PTHR30349">
    <property type="entry name" value="PHAGE INTEGRASE-RELATED"/>
    <property type="match status" value="1"/>
</dbReference>
<dbReference type="PANTHER" id="PTHR30349:SF77">
    <property type="entry name" value="TYROSINE RECOMBINASE XERC"/>
    <property type="match status" value="1"/>
</dbReference>
<dbReference type="Pfam" id="PF02899">
    <property type="entry name" value="Phage_int_SAM_1"/>
    <property type="match status" value="1"/>
</dbReference>
<dbReference type="Pfam" id="PF00589">
    <property type="entry name" value="Phage_integrase"/>
    <property type="match status" value="1"/>
</dbReference>
<dbReference type="SUPFAM" id="SSF56349">
    <property type="entry name" value="DNA breaking-rejoining enzymes"/>
    <property type="match status" value="1"/>
</dbReference>
<dbReference type="PROSITE" id="PS51900">
    <property type="entry name" value="CB"/>
    <property type="match status" value="1"/>
</dbReference>
<dbReference type="PROSITE" id="PS51898">
    <property type="entry name" value="TYR_RECOMBINASE"/>
    <property type="match status" value="1"/>
</dbReference>
<reference key="1">
    <citation type="journal article" date="2009" name="Vaccine">
        <title>Whole genome sequence analysis of Mycobacterium bovis bacillus Calmette-Guerin (BCG) Tokyo 172: a comparative study of BCG vaccine substrains.</title>
        <authorList>
            <person name="Seki M."/>
            <person name="Honda I."/>
            <person name="Fujita I."/>
            <person name="Yano I."/>
            <person name="Yamamoto S."/>
            <person name="Koyama A."/>
        </authorList>
    </citation>
    <scope>NUCLEOTIDE SEQUENCE [LARGE SCALE GENOMIC DNA]</scope>
    <source>
        <strain>BCG / Tokyo 172 / ATCC 35737 / TMC 1019</strain>
    </source>
</reference>
<proteinExistence type="inferred from homology"/>
<gene>
    <name evidence="1" type="primary">xerC</name>
    <name type="ordered locus">JTY_2910</name>
</gene>
<accession>C1AG09</accession>
<feature type="chain" id="PRO_1000187603" description="Tyrosine recombinase XerC">
    <location>
        <begin position="1"/>
        <end position="298"/>
    </location>
</feature>
<feature type="domain" description="Core-binding (CB)" evidence="3">
    <location>
        <begin position="1"/>
        <end position="84"/>
    </location>
</feature>
<feature type="domain" description="Tyr recombinase" evidence="2">
    <location>
        <begin position="105"/>
        <end position="292"/>
    </location>
</feature>
<feature type="active site" evidence="1">
    <location>
        <position position="149"/>
    </location>
</feature>
<feature type="active site" evidence="1">
    <location>
        <position position="173"/>
    </location>
</feature>
<feature type="active site" evidence="1">
    <location>
        <position position="244"/>
    </location>
</feature>
<feature type="active site" evidence="1">
    <location>
        <position position="247"/>
    </location>
</feature>
<feature type="active site" evidence="1">
    <location>
        <position position="270"/>
    </location>
</feature>
<feature type="active site" description="O-(3'-phospho-DNA)-tyrosine intermediate" evidence="1">
    <location>
        <position position="279"/>
    </location>
</feature>
<organism>
    <name type="scientific">Mycobacterium bovis (strain BCG / Tokyo 172 / ATCC 35737 / TMC 1019)</name>
    <dbReference type="NCBI Taxonomy" id="561275"/>
    <lineage>
        <taxon>Bacteria</taxon>
        <taxon>Bacillati</taxon>
        <taxon>Actinomycetota</taxon>
        <taxon>Actinomycetes</taxon>
        <taxon>Mycobacteriales</taxon>
        <taxon>Mycobacteriaceae</taxon>
        <taxon>Mycobacterium</taxon>
        <taxon>Mycobacterium tuberculosis complex</taxon>
    </lineage>
</organism>
<protein>
    <recommendedName>
        <fullName evidence="1">Tyrosine recombinase XerC</fullName>
    </recommendedName>
</protein>
<comment type="function">
    <text evidence="1">Site-specific tyrosine recombinase, which acts by catalyzing the cutting and rejoining of the recombining DNA molecules. The XerC-XerD complex is essential to convert dimers of the bacterial chromosome into monomers to permit their segregation at cell division. It also contributes to the segregational stability of plasmids.</text>
</comment>
<comment type="subunit">
    <text evidence="1">Forms a cyclic heterotetrameric complex composed of two molecules of XerC and two molecules of XerD.</text>
</comment>
<comment type="subcellular location">
    <subcellularLocation>
        <location evidence="1">Cytoplasm</location>
    </subcellularLocation>
</comment>
<comment type="similarity">
    <text evidence="1">Belongs to the 'phage' integrase family. XerC subfamily.</text>
</comment>
<keyword id="KW-0131">Cell cycle</keyword>
<keyword id="KW-0132">Cell division</keyword>
<keyword id="KW-0159">Chromosome partition</keyword>
<keyword id="KW-0963">Cytoplasm</keyword>
<keyword id="KW-0229">DNA integration</keyword>
<keyword id="KW-0233">DNA recombination</keyword>
<keyword id="KW-0238">DNA-binding</keyword>
<evidence type="ECO:0000255" key="1">
    <source>
        <dbReference type="HAMAP-Rule" id="MF_01808"/>
    </source>
</evidence>
<evidence type="ECO:0000255" key="2">
    <source>
        <dbReference type="PROSITE-ProRule" id="PRU01246"/>
    </source>
</evidence>
<evidence type="ECO:0000255" key="3">
    <source>
        <dbReference type="PROSITE-ProRule" id="PRU01248"/>
    </source>
</evidence>